<comment type="function">
    <text evidence="1">Probably involved in ribonucleotide reductase function.</text>
</comment>
<comment type="similarity">
    <text evidence="1">Belongs to the NrdI family.</text>
</comment>
<reference key="1">
    <citation type="journal article" date="2008" name="Environ. Microbiol.">
        <title>The genome of Erwinia tasmaniensis strain Et1/99, a non-pathogenic bacterium in the genus Erwinia.</title>
        <authorList>
            <person name="Kube M."/>
            <person name="Migdoll A.M."/>
            <person name="Mueller I."/>
            <person name="Kuhl H."/>
            <person name="Beck A."/>
            <person name="Reinhardt R."/>
            <person name="Geider K."/>
        </authorList>
    </citation>
    <scope>NUCLEOTIDE SEQUENCE [LARGE SCALE GENOMIC DNA]</scope>
    <source>
        <strain>DSM 17950 / CFBP 7177 / CIP 109463 / NCPPB 4357 / Et1/99</strain>
    </source>
</reference>
<name>NRDI_ERWT9</name>
<proteinExistence type="inferred from homology"/>
<organism>
    <name type="scientific">Erwinia tasmaniensis (strain DSM 17950 / CFBP 7177 / CIP 109463 / NCPPB 4357 / Et1/99)</name>
    <dbReference type="NCBI Taxonomy" id="465817"/>
    <lineage>
        <taxon>Bacteria</taxon>
        <taxon>Pseudomonadati</taxon>
        <taxon>Pseudomonadota</taxon>
        <taxon>Gammaproteobacteria</taxon>
        <taxon>Enterobacterales</taxon>
        <taxon>Erwiniaceae</taxon>
        <taxon>Erwinia</taxon>
    </lineage>
</organism>
<protein>
    <recommendedName>
        <fullName evidence="1">Protein NrdI</fullName>
    </recommendedName>
</protein>
<evidence type="ECO:0000255" key="1">
    <source>
        <dbReference type="HAMAP-Rule" id="MF_00128"/>
    </source>
</evidence>
<accession>B2VDV1</accession>
<dbReference type="EMBL" id="CU468135">
    <property type="protein sequence ID" value="CAO95985.1"/>
    <property type="molecule type" value="Genomic_DNA"/>
</dbReference>
<dbReference type="RefSeq" id="WP_012440687.1">
    <property type="nucleotide sequence ID" value="NC_010694.1"/>
</dbReference>
<dbReference type="SMR" id="B2VDV1"/>
<dbReference type="STRING" id="465817.ETA_09390"/>
<dbReference type="KEGG" id="eta:ETA_09390"/>
<dbReference type="eggNOG" id="COG1780">
    <property type="taxonomic scope" value="Bacteria"/>
</dbReference>
<dbReference type="HOGENOM" id="CLU_114845_0_0_6"/>
<dbReference type="OrthoDB" id="350535at2"/>
<dbReference type="Proteomes" id="UP000001726">
    <property type="component" value="Chromosome"/>
</dbReference>
<dbReference type="GO" id="GO:0010181">
    <property type="term" value="F:FMN binding"/>
    <property type="evidence" value="ECO:0007669"/>
    <property type="project" value="InterPro"/>
</dbReference>
<dbReference type="GO" id="GO:0036211">
    <property type="term" value="P:protein modification process"/>
    <property type="evidence" value="ECO:0007669"/>
    <property type="project" value="InterPro"/>
</dbReference>
<dbReference type="FunFam" id="3.40.50.360:FF:000005">
    <property type="entry name" value="Protein NrdI"/>
    <property type="match status" value="1"/>
</dbReference>
<dbReference type="Gene3D" id="3.40.50.360">
    <property type="match status" value="1"/>
</dbReference>
<dbReference type="HAMAP" id="MF_00128">
    <property type="entry name" value="NrdI"/>
    <property type="match status" value="1"/>
</dbReference>
<dbReference type="InterPro" id="IPR029039">
    <property type="entry name" value="Flavoprotein-like_sf"/>
</dbReference>
<dbReference type="InterPro" id="IPR020852">
    <property type="entry name" value="RNR_Ib_NrdI_bac"/>
</dbReference>
<dbReference type="InterPro" id="IPR004465">
    <property type="entry name" value="RNR_NrdI"/>
</dbReference>
<dbReference type="NCBIfam" id="TIGR00333">
    <property type="entry name" value="nrdI"/>
    <property type="match status" value="1"/>
</dbReference>
<dbReference type="PANTHER" id="PTHR37297">
    <property type="entry name" value="PROTEIN NRDI"/>
    <property type="match status" value="1"/>
</dbReference>
<dbReference type="PANTHER" id="PTHR37297:SF1">
    <property type="entry name" value="PROTEIN NRDI"/>
    <property type="match status" value="1"/>
</dbReference>
<dbReference type="Pfam" id="PF07972">
    <property type="entry name" value="Flavodoxin_NdrI"/>
    <property type="match status" value="1"/>
</dbReference>
<dbReference type="PIRSF" id="PIRSF005087">
    <property type="entry name" value="NrdI"/>
    <property type="match status" value="1"/>
</dbReference>
<dbReference type="SUPFAM" id="SSF52218">
    <property type="entry name" value="Flavoproteins"/>
    <property type="match status" value="1"/>
</dbReference>
<keyword id="KW-1185">Reference proteome</keyword>
<gene>
    <name evidence="1" type="primary">nrdI</name>
    <name type="ordered locus">ETA_09390</name>
</gene>
<feature type="chain" id="PRO_1000095622" description="Protein NrdI">
    <location>
        <begin position="1"/>
        <end position="136"/>
    </location>
</feature>
<sequence>MATLVYFSSLSENTHRFIVRLNLPARRIPLDSSQQLQVSEPYILVVPSYGGGTRHGAVPKQVIQFLNDINNRQLIRGVIAAGNRNFGEAFCLAGDIIARKCHVPYLYRFELMGTSDDIANIYKGVTEFWQRQTAHS</sequence>